<comment type="function">
    <text evidence="2">Nucleotide-sugar transporter that transports UDP-rhamnose or UDP-galactose and UMP in a strict counter-exchange mode.</text>
</comment>
<comment type="biophysicochemical properties">
    <kinetics>
        <KM evidence="2">61 uM for UDP-Rhamnose</KM>
        <KM evidence="2">68 uM for UDP-Galactose</KM>
        <Vmax evidence="2">34.0 nmol/sec/mg enzyme toward UDP-Rhamnose</Vmax>
        <Vmax evidence="2">19.0 nmol/sec/mg enzyme toward UDP-Galactose</Vmax>
    </kinetics>
</comment>
<comment type="subcellular location">
    <subcellularLocation>
        <location evidence="2">Golgi apparatus membrane</location>
        <topology evidence="1">Multi-pass membrane protein</topology>
    </subcellularLocation>
</comment>
<comment type="developmental stage">
    <text evidence="2">Preferentially expressed during seed development.</text>
</comment>
<comment type="disruption phenotype">
    <text evidence="2">No visible phenotype. Lower content of seed mucilage.</text>
</comment>
<comment type="similarity">
    <text evidence="4">Belongs to the TPT transporter family. TPT (TC 2.A.7.9) subfamily.</text>
</comment>
<comment type="sequence caution" evidence="4">
    <conflict type="erroneous initiation">
        <sequence resource="EMBL-CDS" id="BAC42299"/>
    </conflict>
    <text>Truncated N-terminus.</text>
</comment>
<feature type="chain" id="PRO_0000439520" description="UDP-rhamnose/UDP-galactose transporter 2">
    <location>
        <begin position="1"/>
        <end position="348"/>
    </location>
</feature>
<feature type="transmembrane region" description="Helical" evidence="1">
    <location>
        <begin position="12"/>
        <end position="32"/>
    </location>
</feature>
<feature type="transmembrane region" description="Helical" evidence="1">
    <location>
        <begin position="44"/>
        <end position="64"/>
    </location>
</feature>
<feature type="transmembrane region" description="Helical" evidence="1">
    <location>
        <begin position="81"/>
        <end position="101"/>
    </location>
</feature>
<feature type="transmembrane region" description="Helical" evidence="1">
    <location>
        <begin position="104"/>
        <end position="124"/>
    </location>
</feature>
<feature type="transmembrane region" description="Helical" evidence="1">
    <location>
        <begin position="133"/>
        <end position="153"/>
    </location>
</feature>
<feature type="transmembrane region" description="Helical" evidence="1">
    <location>
        <begin position="160"/>
        <end position="180"/>
    </location>
</feature>
<feature type="transmembrane region" description="Helical" evidence="1">
    <location>
        <begin position="196"/>
        <end position="216"/>
    </location>
</feature>
<feature type="transmembrane region" description="Helical" evidence="1">
    <location>
        <begin position="230"/>
        <end position="250"/>
    </location>
</feature>
<feature type="transmembrane region" description="Helical" evidence="1">
    <location>
        <begin position="257"/>
        <end position="277"/>
    </location>
</feature>
<feature type="transmembrane region" description="Helical" evidence="1">
    <location>
        <begin position="286"/>
        <end position="306"/>
    </location>
</feature>
<feature type="sequence conflict" description="In Ref. 5; AAM61035." evidence="4" ref="5">
    <original>K</original>
    <variation>N</variation>
    <location>
        <position position="8"/>
    </location>
</feature>
<feature type="sequence conflict" description="In Ref. 6; BAC42299." evidence="4" ref="6">
    <original>F</original>
    <variation>L</variation>
    <location>
        <position position="42"/>
    </location>
</feature>
<feature type="sequence conflict" description="In Ref. 5; AAM61035." evidence="4" ref="5">
    <original>V</original>
    <variation>F</variation>
    <location>
        <position position="155"/>
    </location>
</feature>
<accession>Q9LPU2</accession>
<accession>Q8GYG5</accession>
<accession>Q8LG49</accession>
<name>URGT2_ARATH</name>
<dbReference type="EMBL" id="KP872774">
    <property type="protein sequence ID" value="AKA88220.1"/>
    <property type="molecule type" value="mRNA"/>
</dbReference>
<dbReference type="EMBL" id="AC012190">
    <property type="protein sequence ID" value="AAF80654.1"/>
    <property type="molecule type" value="Genomic_DNA"/>
</dbReference>
<dbReference type="EMBL" id="CP002684">
    <property type="protein sequence ID" value="AEE30059.1"/>
    <property type="molecule type" value="Genomic_DNA"/>
</dbReference>
<dbReference type="EMBL" id="BT024726">
    <property type="protein sequence ID" value="ABD59064.1"/>
    <property type="molecule type" value="mRNA"/>
</dbReference>
<dbReference type="EMBL" id="AY084463">
    <property type="protein sequence ID" value="AAM61035.1"/>
    <property type="molecule type" value="mRNA"/>
</dbReference>
<dbReference type="EMBL" id="AK117643">
    <property type="protein sequence ID" value="BAC42299.1"/>
    <property type="status" value="ALT_INIT"/>
    <property type="molecule type" value="mRNA"/>
</dbReference>
<dbReference type="PIR" id="G86343">
    <property type="entry name" value="G86343"/>
</dbReference>
<dbReference type="RefSeq" id="NP_564133.1">
    <property type="nucleotide sequence ID" value="NM_101961.4"/>
</dbReference>
<dbReference type="SMR" id="Q9LPU2"/>
<dbReference type="FunCoup" id="Q9LPU2">
    <property type="interactions" value="2614"/>
</dbReference>
<dbReference type="STRING" id="3702.Q9LPU2"/>
<dbReference type="TCDB" id="2.A.7.9.13">
    <property type="family name" value="the drug/metabolite transporter (dmt) superfamily"/>
</dbReference>
<dbReference type="PaxDb" id="3702-AT1G21070.1"/>
<dbReference type="ProteomicsDB" id="228631"/>
<dbReference type="EnsemblPlants" id="AT1G21070.1">
    <property type="protein sequence ID" value="AT1G21070.1"/>
    <property type="gene ID" value="AT1G21070"/>
</dbReference>
<dbReference type="GeneID" id="838703"/>
<dbReference type="Gramene" id="AT1G21070.1">
    <property type="protein sequence ID" value="AT1G21070.1"/>
    <property type="gene ID" value="AT1G21070"/>
</dbReference>
<dbReference type="KEGG" id="ath:AT1G21070"/>
<dbReference type="Araport" id="AT1G21070"/>
<dbReference type="TAIR" id="AT1G21070">
    <property type="gene designation" value="URGT2"/>
</dbReference>
<dbReference type="eggNOG" id="KOG1441">
    <property type="taxonomic scope" value="Eukaryota"/>
</dbReference>
<dbReference type="HOGENOM" id="CLU_048347_0_1_1"/>
<dbReference type="InParanoid" id="Q9LPU2"/>
<dbReference type="OMA" id="MEWVLHS"/>
<dbReference type="OrthoDB" id="5547497at2759"/>
<dbReference type="PhylomeDB" id="Q9LPU2"/>
<dbReference type="PRO" id="PR:Q9LPU2"/>
<dbReference type="Proteomes" id="UP000006548">
    <property type="component" value="Chromosome 1"/>
</dbReference>
<dbReference type="ExpressionAtlas" id="Q9LPU2">
    <property type="expression patterns" value="baseline and differential"/>
</dbReference>
<dbReference type="GO" id="GO:0005794">
    <property type="term" value="C:Golgi apparatus"/>
    <property type="evidence" value="ECO:0000314"/>
    <property type="project" value="TAIR"/>
</dbReference>
<dbReference type="GO" id="GO:0000139">
    <property type="term" value="C:Golgi membrane"/>
    <property type="evidence" value="ECO:0007669"/>
    <property type="project" value="UniProtKB-SubCell"/>
</dbReference>
<dbReference type="GO" id="GO:0015297">
    <property type="term" value="F:antiporter activity"/>
    <property type="evidence" value="ECO:0000314"/>
    <property type="project" value="UniProtKB"/>
</dbReference>
<dbReference type="GO" id="GO:0022857">
    <property type="term" value="F:transmembrane transporter activity"/>
    <property type="evidence" value="ECO:0000314"/>
    <property type="project" value="TAIR"/>
</dbReference>
<dbReference type="GO" id="GO:0048354">
    <property type="term" value="P:mucilage biosynthetic process involved in seed coat development"/>
    <property type="evidence" value="ECO:0000315"/>
    <property type="project" value="TAIR"/>
</dbReference>
<dbReference type="InterPro" id="IPR004853">
    <property type="entry name" value="Sugar_P_trans_dom"/>
</dbReference>
<dbReference type="InterPro" id="IPR050186">
    <property type="entry name" value="TPT_transporter"/>
</dbReference>
<dbReference type="PANTHER" id="PTHR11132">
    <property type="entry name" value="SOLUTE CARRIER FAMILY 35"/>
    <property type="match status" value="1"/>
</dbReference>
<dbReference type="Pfam" id="PF03151">
    <property type="entry name" value="TPT"/>
    <property type="match status" value="1"/>
</dbReference>
<dbReference type="SUPFAM" id="SSF103481">
    <property type="entry name" value="Multidrug resistance efflux transporter EmrE"/>
    <property type="match status" value="1"/>
</dbReference>
<proteinExistence type="evidence at protein level"/>
<evidence type="ECO:0000255" key="1"/>
<evidence type="ECO:0000269" key="2">
    <source>
    </source>
</evidence>
<evidence type="ECO:0000303" key="3">
    <source>
    </source>
</evidence>
<evidence type="ECO:0000305" key="4"/>
<evidence type="ECO:0000312" key="5">
    <source>
        <dbReference type="Araport" id="AT1G21070"/>
    </source>
</evidence>
<evidence type="ECO:0000312" key="6">
    <source>
        <dbReference type="EMBL" id="AAF80654.1"/>
    </source>
</evidence>
<evidence type="ECO:0000312" key="7">
    <source>
        <dbReference type="EMBL" id="AKA88220.1"/>
    </source>
</evidence>
<protein>
    <recommendedName>
        <fullName evidence="7">UDP-rhamnose/UDP-galactose transporter 2</fullName>
        <shortName evidence="3">UDP-Rha/UDP-Gal transporter 2</shortName>
    </recommendedName>
</protein>
<sequence length="348" mass="38044">MEKAENEKKPSAVSDVGAWAMNVTSSVGIIMANKQLMSSSGFGFSFATTLTGFHFALTALVGMVSNATGLSASKHVPLWELLWFSLVANISIAAMNFSLMLNSVGFYQISKLSMIPVVCVMEWVLHSKHYSREVKASVMVVVVGVGICTVTDVKVNAKGFICACTAVFSTSLQQISIGSLQKKYSIGSFELLSKTAPIQAISLLIFGPFVDYFLSGRFISTYKMTYSAMLCILLSCALAVFCNISQYLCIGRFSATSFQVLGHMKTVCVLTLGWLIFDSEMTFKNIAGMVLAVVGMVIYSWAVELEKQRKSKVIPHGKHSMTEDEIKLLKEGIEHMDLKDMELGNNKA</sequence>
<reference key="1">
    <citation type="journal article" date="2014" name="Proc. Natl. Acad. Sci. U.S.A.">
        <title>The Golgi localized bifunctional UDP-rhamnose/UDP-galactose transporter family of Arabidopsis.</title>
        <authorList>
            <person name="Rautengarten C."/>
            <person name="Ebert B."/>
            <person name="Moreno I."/>
            <person name="Temple H."/>
            <person name="Herter T."/>
            <person name="Link B."/>
            <person name="Donas-Cofre D."/>
            <person name="Moreno A."/>
            <person name="Saez-Aguayo S."/>
            <person name="Blanco F."/>
            <person name="Mortimer J.C."/>
            <person name="Schultink A."/>
            <person name="Reiter W.D."/>
            <person name="Dupree P."/>
            <person name="Pauly M."/>
            <person name="Heazlewood J.L."/>
            <person name="Scheller H.V."/>
            <person name="Orellana A."/>
        </authorList>
    </citation>
    <scope>NUCLEOTIDE SEQUENCE [MRNA]</scope>
    <scope>GENE FAMILY</scope>
    <scope>NOMENCLATURE</scope>
    <scope>SUBCELLULAR LOCATION</scope>
    <scope>FUNCTION</scope>
    <scope>DEVELOPMENTAL STAGE</scope>
    <scope>DISRUPTION PHENOTYPE</scope>
    <scope>BIOPHYSICOCHEMICAL PROPERTIES</scope>
    <source>
        <strain>cv. Columbia</strain>
    </source>
</reference>
<reference key="2">
    <citation type="journal article" date="2000" name="Nature">
        <title>Sequence and analysis of chromosome 1 of the plant Arabidopsis thaliana.</title>
        <authorList>
            <person name="Theologis A."/>
            <person name="Ecker J.R."/>
            <person name="Palm C.J."/>
            <person name="Federspiel N.A."/>
            <person name="Kaul S."/>
            <person name="White O."/>
            <person name="Alonso J."/>
            <person name="Altafi H."/>
            <person name="Araujo R."/>
            <person name="Bowman C.L."/>
            <person name="Brooks S.Y."/>
            <person name="Buehler E."/>
            <person name="Chan A."/>
            <person name="Chao Q."/>
            <person name="Chen H."/>
            <person name="Cheuk R.F."/>
            <person name="Chin C.W."/>
            <person name="Chung M.K."/>
            <person name="Conn L."/>
            <person name="Conway A.B."/>
            <person name="Conway A.R."/>
            <person name="Creasy T.H."/>
            <person name="Dewar K."/>
            <person name="Dunn P."/>
            <person name="Etgu P."/>
            <person name="Feldblyum T.V."/>
            <person name="Feng J.-D."/>
            <person name="Fong B."/>
            <person name="Fujii C.Y."/>
            <person name="Gill J.E."/>
            <person name="Goldsmith A.D."/>
            <person name="Haas B."/>
            <person name="Hansen N.F."/>
            <person name="Hughes B."/>
            <person name="Huizar L."/>
            <person name="Hunter J.L."/>
            <person name="Jenkins J."/>
            <person name="Johnson-Hopson C."/>
            <person name="Khan S."/>
            <person name="Khaykin E."/>
            <person name="Kim C.J."/>
            <person name="Koo H.L."/>
            <person name="Kremenetskaia I."/>
            <person name="Kurtz D.B."/>
            <person name="Kwan A."/>
            <person name="Lam B."/>
            <person name="Langin-Hooper S."/>
            <person name="Lee A."/>
            <person name="Lee J.M."/>
            <person name="Lenz C.A."/>
            <person name="Li J.H."/>
            <person name="Li Y.-P."/>
            <person name="Lin X."/>
            <person name="Liu S.X."/>
            <person name="Liu Z.A."/>
            <person name="Luros J.S."/>
            <person name="Maiti R."/>
            <person name="Marziali A."/>
            <person name="Militscher J."/>
            <person name="Miranda M."/>
            <person name="Nguyen M."/>
            <person name="Nierman W.C."/>
            <person name="Osborne B.I."/>
            <person name="Pai G."/>
            <person name="Peterson J."/>
            <person name="Pham P.K."/>
            <person name="Rizzo M."/>
            <person name="Rooney T."/>
            <person name="Rowley D."/>
            <person name="Sakano H."/>
            <person name="Salzberg S.L."/>
            <person name="Schwartz J.R."/>
            <person name="Shinn P."/>
            <person name="Southwick A.M."/>
            <person name="Sun H."/>
            <person name="Tallon L.J."/>
            <person name="Tambunga G."/>
            <person name="Toriumi M.J."/>
            <person name="Town C.D."/>
            <person name="Utterback T."/>
            <person name="Van Aken S."/>
            <person name="Vaysberg M."/>
            <person name="Vysotskaia V.S."/>
            <person name="Walker M."/>
            <person name="Wu D."/>
            <person name="Yu G."/>
            <person name="Fraser C.M."/>
            <person name="Venter J.C."/>
            <person name="Davis R.W."/>
        </authorList>
    </citation>
    <scope>NUCLEOTIDE SEQUENCE [LARGE SCALE GENOMIC DNA]</scope>
    <source>
        <strain>cv. Columbia</strain>
    </source>
</reference>
<reference key="3">
    <citation type="journal article" date="2017" name="Plant J.">
        <title>Araport11: a complete reannotation of the Arabidopsis thaliana reference genome.</title>
        <authorList>
            <person name="Cheng C.Y."/>
            <person name="Krishnakumar V."/>
            <person name="Chan A.P."/>
            <person name="Thibaud-Nissen F."/>
            <person name="Schobel S."/>
            <person name="Town C.D."/>
        </authorList>
    </citation>
    <scope>GENOME REANNOTATION</scope>
    <source>
        <strain>cv. Columbia</strain>
    </source>
</reference>
<reference key="4">
    <citation type="submission" date="2006-03" db="EMBL/GenBank/DDBJ databases">
        <title>Arabidopsis ORF clones.</title>
        <authorList>
            <person name="Shinn P."/>
            <person name="Chen H."/>
            <person name="Kim C.J."/>
            <person name="Ecker J.R."/>
        </authorList>
    </citation>
    <scope>NUCLEOTIDE SEQUENCE [LARGE SCALE MRNA]</scope>
    <source>
        <strain>cv. Columbia</strain>
    </source>
</reference>
<reference key="5">
    <citation type="submission" date="2002-03" db="EMBL/GenBank/DDBJ databases">
        <title>Full-length cDNA from Arabidopsis thaliana.</title>
        <authorList>
            <person name="Brover V.V."/>
            <person name="Troukhan M.E."/>
            <person name="Alexandrov N.A."/>
            <person name="Lu Y.-P."/>
            <person name="Flavell R.B."/>
            <person name="Feldmann K.A."/>
        </authorList>
    </citation>
    <scope>NUCLEOTIDE SEQUENCE [LARGE SCALE MRNA]</scope>
</reference>
<reference key="6">
    <citation type="journal article" date="2002" name="Science">
        <title>Functional annotation of a full-length Arabidopsis cDNA collection.</title>
        <authorList>
            <person name="Seki M."/>
            <person name="Narusaka M."/>
            <person name="Kamiya A."/>
            <person name="Ishida J."/>
            <person name="Satou M."/>
            <person name="Sakurai T."/>
            <person name="Nakajima M."/>
            <person name="Enju A."/>
            <person name="Akiyama K."/>
            <person name="Oono Y."/>
            <person name="Muramatsu M."/>
            <person name="Hayashizaki Y."/>
            <person name="Kawai J."/>
            <person name="Carninci P."/>
            <person name="Itoh M."/>
            <person name="Ishii Y."/>
            <person name="Arakawa T."/>
            <person name="Shibata K."/>
            <person name="Shinagawa A."/>
            <person name="Shinozaki K."/>
        </authorList>
    </citation>
    <scope>NUCLEOTIDE SEQUENCE [LARGE SCALE MRNA] OF 33-348</scope>
    <source>
        <strain>cv. Columbia</strain>
    </source>
</reference>
<reference key="7">
    <citation type="journal article" date="2015" name="Plant Cell">
        <title>Identification and characterization of a Golgi-localized UDP-xylose transporter family from Arabidopsis.</title>
        <authorList>
            <person name="Ebert B."/>
            <person name="Rautengarten C."/>
            <person name="Guo X."/>
            <person name="Xiong G."/>
            <person name="Stonebloom S."/>
            <person name="Smith-Moritz A.M."/>
            <person name="Herter T."/>
            <person name="Chan L.J."/>
            <person name="Adams P.D."/>
            <person name="Petzold C.J."/>
            <person name="Pauly M."/>
            <person name="Willats W.G."/>
            <person name="Heazlewood J.L."/>
            <person name="Scheller H.V."/>
        </authorList>
    </citation>
    <scope>GENE FAMILY</scope>
</reference>
<gene>
    <name evidence="7" type="primary">URGT2</name>
    <name evidence="5" type="ordered locus">At1g21070</name>
    <name evidence="6" type="ORF">T22I11.10</name>
</gene>
<organism>
    <name type="scientific">Arabidopsis thaliana</name>
    <name type="common">Mouse-ear cress</name>
    <dbReference type="NCBI Taxonomy" id="3702"/>
    <lineage>
        <taxon>Eukaryota</taxon>
        <taxon>Viridiplantae</taxon>
        <taxon>Streptophyta</taxon>
        <taxon>Embryophyta</taxon>
        <taxon>Tracheophyta</taxon>
        <taxon>Spermatophyta</taxon>
        <taxon>Magnoliopsida</taxon>
        <taxon>eudicotyledons</taxon>
        <taxon>Gunneridae</taxon>
        <taxon>Pentapetalae</taxon>
        <taxon>rosids</taxon>
        <taxon>malvids</taxon>
        <taxon>Brassicales</taxon>
        <taxon>Brassicaceae</taxon>
        <taxon>Camelineae</taxon>
        <taxon>Arabidopsis</taxon>
    </lineage>
</organism>
<keyword id="KW-0050">Antiport</keyword>
<keyword id="KW-0333">Golgi apparatus</keyword>
<keyword id="KW-0472">Membrane</keyword>
<keyword id="KW-1185">Reference proteome</keyword>
<keyword id="KW-0762">Sugar transport</keyword>
<keyword id="KW-0812">Transmembrane</keyword>
<keyword id="KW-1133">Transmembrane helix</keyword>
<keyword id="KW-0813">Transport</keyword>